<dbReference type="EC" id="2.7.11.16"/>
<dbReference type="EMBL" id="AF040745">
    <property type="protein sequence ID" value="AAC09266.1"/>
    <property type="molecule type" value="mRNA"/>
</dbReference>
<dbReference type="EMBL" id="AK132685">
    <property type="protein sequence ID" value="BAE21301.1"/>
    <property type="molecule type" value="mRNA"/>
</dbReference>
<dbReference type="EMBL" id="CH466524">
    <property type="protein sequence ID" value="EDL37466.1"/>
    <property type="molecule type" value="Genomic_DNA"/>
</dbReference>
<dbReference type="EMBL" id="BC150691">
    <property type="protein sequence ID" value="AAI50692.1"/>
    <property type="molecule type" value="mRNA"/>
</dbReference>
<dbReference type="CCDS" id="CCDS19219.1"/>
<dbReference type="RefSeq" id="NP_001074212.1">
    <property type="nucleotide sequence ID" value="NM_001080743.1"/>
</dbReference>
<dbReference type="RefSeq" id="NP_062370.2">
    <property type="nucleotide sequence ID" value="NM_019497.3"/>
</dbReference>
<dbReference type="SMR" id="O70291"/>
<dbReference type="FunCoup" id="O70291">
    <property type="interactions" value="1066"/>
</dbReference>
<dbReference type="STRING" id="10090.ENSMUSP00000001112"/>
<dbReference type="iPTMnet" id="O70291"/>
<dbReference type="PhosphoSitePlus" id="O70291"/>
<dbReference type="PaxDb" id="10090-ENSMUSP00000001112"/>
<dbReference type="PeptideAtlas" id="O70291"/>
<dbReference type="ProteomicsDB" id="271165"/>
<dbReference type="Antibodypedia" id="3832">
    <property type="antibodies" value="272 antibodies from 29 providers"/>
</dbReference>
<dbReference type="DNASU" id="14772"/>
<dbReference type="Ensembl" id="ENSMUST00000001112.14">
    <property type="protein sequence ID" value="ENSMUSP00000001112.8"/>
    <property type="gene ID" value="ENSMUSG00000052783.17"/>
</dbReference>
<dbReference type="GeneID" id="14772"/>
<dbReference type="KEGG" id="mmu:14772"/>
<dbReference type="UCSC" id="uc008xcz.1">
    <property type="organism name" value="mouse"/>
</dbReference>
<dbReference type="AGR" id="MGI:95801"/>
<dbReference type="CTD" id="2868"/>
<dbReference type="MGI" id="MGI:95801">
    <property type="gene designation" value="Grk4"/>
</dbReference>
<dbReference type="VEuPathDB" id="HostDB:ENSMUSG00000052783"/>
<dbReference type="eggNOG" id="KOG0986">
    <property type="taxonomic scope" value="Eukaryota"/>
</dbReference>
<dbReference type="GeneTree" id="ENSGT00940000160151"/>
<dbReference type="HOGENOM" id="CLU_000288_63_41_1"/>
<dbReference type="InParanoid" id="O70291"/>
<dbReference type="OMA" id="PFRPDPN"/>
<dbReference type="OrthoDB" id="80479at9989"/>
<dbReference type="PhylomeDB" id="O70291"/>
<dbReference type="TreeFam" id="TF313940"/>
<dbReference type="Reactome" id="R-MMU-2514859">
    <property type="pathway name" value="Inactivation, recovery and regulation of the phototransduction cascade"/>
</dbReference>
<dbReference type="BioGRID-ORCS" id="14772">
    <property type="hits" value="1 hit in 80 CRISPR screens"/>
</dbReference>
<dbReference type="ChiTaRS" id="Grk4">
    <property type="organism name" value="mouse"/>
</dbReference>
<dbReference type="PRO" id="PR:O70291"/>
<dbReference type="Proteomes" id="UP000000589">
    <property type="component" value="Chromosome 5"/>
</dbReference>
<dbReference type="RNAct" id="O70291">
    <property type="molecule type" value="protein"/>
</dbReference>
<dbReference type="Bgee" id="ENSMUSG00000052783">
    <property type="expression patterns" value="Expressed in spermatid and 85 other cell types or tissues"/>
</dbReference>
<dbReference type="ExpressionAtlas" id="O70291">
    <property type="expression patterns" value="baseline and differential"/>
</dbReference>
<dbReference type="GO" id="GO:0005938">
    <property type="term" value="C:cell cortex"/>
    <property type="evidence" value="ECO:0007669"/>
    <property type="project" value="UniProtKB-SubCell"/>
</dbReference>
<dbReference type="GO" id="GO:0005829">
    <property type="term" value="C:cytosol"/>
    <property type="evidence" value="ECO:0007669"/>
    <property type="project" value="Ensembl"/>
</dbReference>
<dbReference type="GO" id="GO:0005886">
    <property type="term" value="C:plasma membrane"/>
    <property type="evidence" value="ECO:0007669"/>
    <property type="project" value="Ensembl"/>
</dbReference>
<dbReference type="GO" id="GO:0005524">
    <property type="term" value="F:ATP binding"/>
    <property type="evidence" value="ECO:0007669"/>
    <property type="project" value="UniProtKB-KW"/>
</dbReference>
<dbReference type="GO" id="GO:0004703">
    <property type="term" value="F:G protein-coupled receptor kinase activity"/>
    <property type="evidence" value="ECO:0007669"/>
    <property type="project" value="UniProtKB-EC"/>
</dbReference>
<dbReference type="GO" id="GO:0031623">
    <property type="term" value="P:receptor internalization"/>
    <property type="evidence" value="ECO:0007669"/>
    <property type="project" value="Ensembl"/>
</dbReference>
<dbReference type="GO" id="GO:0007165">
    <property type="term" value="P:signal transduction"/>
    <property type="evidence" value="ECO:0007669"/>
    <property type="project" value="InterPro"/>
</dbReference>
<dbReference type="CDD" id="cd05605">
    <property type="entry name" value="STKc_GRK4_like"/>
    <property type="match status" value="1"/>
</dbReference>
<dbReference type="FunFam" id="1.10.167.10:FF:000009">
    <property type="entry name" value="G protein-coupled receptor kinase"/>
    <property type="match status" value="1"/>
</dbReference>
<dbReference type="FunFam" id="1.10.510.10:FF:000074">
    <property type="entry name" value="G protein-coupled receptor kinase"/>
    <property type="match status" value="1"/>
</dbReference>
<dbReference type="Gene3D" id="3.30.200.20">
    <property type="entry name" value="Phosphorylase Kinase, domain 1"/>
    <property type="match status" value="1"/>
</dbReference>
<dbReference type="Gene3D" id="1.10.167.10">
    <property type="entry name" value="Regulator of G-protein Signalling 4, domain 2"/>
    <property type="match status" value="1"/>
</dbReference>
<dbReference type="Gene3D" id="1.10.510.10">
    <property type="entry name" value="Transferase(Phosphotransferase) domain 1"/>
    <property type="match status" value="1"/>
</dbReference>
<dbReference type="InterPro" id="IPR000961">
    <property type="entry name" value="AGC-kinase_C"/>
</dbReference>
<dbReference type="InterPro" id="IPR000239">
    <property type="entry name" value="GPCR_kinase"/>
</dbReference>
<dbReference type="InterPro" id="IPR011009">
    <property type="entry name" value="Kinase-like_dom_sf"/>
</dbReference>
<dbReference type="InterPro" id="IPR000719">
    <property type="entry name" value="Prot_kinase_dom"/>
</dbReference>
<dbReference type="InterPro" id="IPR017441">
    <property type="entry name" value="Protein_kinase_ATP_BS"/>
</dbReference>
<dbReference type="InterPro" id="IPR016137">
    <property type="entry name" value="RGS"/>
</dbReference>
<dbReference type="InterPro" id="IPR036305">
    <property type="entry name" value="RGS_sf"/>
</dbReference>
<dbReference type="InterPro" id="IPR044926">
    <property type="entry name" value="RGS_subdomain_2"/>
</dbReference>
<dbReference type="InterPro" id="IPR008271">
    <property type="entry name" value="Ser/Thr_kinase_AS"/>
</dbReference>
<dbReference type="PANTHER" id="PTHR24355:SF14">
    <property type="entry name" value="G PROTEIN-COUPLED RECEPTOR KINASE 4"/>
    <property type="match status" value="1"/>
</dbReference>
<dbReference type="PANTHER" id="PTHR24355">
    <property type="entry name" value="G PROTEIN-COUPLED RECEPTOR KINASE/RIBOSOMAL PROTEIN S6 KINASE"/>
    <property type="match status" value="1"/>
</dbReference>
<dbReference type="Pfam" id="PF00069">
    <property type="entry name" value="Pkinase"/>
    <property type="match status" value="1"/>
</dbReference>
<dbReference type="Pfam" id="PF00615">
    <property type="entry name" value="RGS"/>
    <property type="match status" value="1"/>
</dbReference>
<dbReference type="PRINTS" id="PR00717">
    <property type="entry name" value="GPCRKINASE"/>
</dbReference>
<dbReference type="SMART" id="SM00315">
    <property type="entry name" value="RGS"/>
    <property type="match status" value="1"/>
</dbReference>
<dbReference type="SMART" id="SM00133">
    <property type="entry name" value="S_TK_X"/>
    <property type="match status" value="1"/>
</dbReference>
<dbReference type="SMART" id="SM00220">
    <property type="entry name" value="S_TKc"/>
    <property type="match status" value="1"/>
</dbReference>
<dbReference type="SUPFAM" id="SSF56112">
    <property type="entry name" value="Protein kinase-like (PK-like)"/>
    <property type="match status" value="1"/>
</dbReference>
<dbReference type="SUPFAM" id="SSF48097">
    <property type="entry name" value="Regulator of G-protein signaling, RGS"/>
    <property type="match status" value="1"/>
</dbReference>
<dbReference type="PROSITE" id="PS51285">
    <property type="entry name" value="AGC_KINASE_CTER"/>
    <property type="match status" value="1"/>
</dbReference>
<dbReference type="PROSITE" id="PS00107">
    <property type="entry name" value="PROTEIN_KINASE_ATP"/>
    <property type="match status" value="1"/>
</dbReference>
<dbReference type="PROSITE" id="PS50011">
    <property type="entry name" value="PROTEIN_KINASE_DOM"/>
    <property type="match status" value="1"/>
</dbReference>
<dbReference type="PROSITE" id="PS00108">
    <property type="entry name" value="PROTEIN_KINASE_ST"/>
    <property type="match status" value="1"/>
</dbReference>
<dbReference type="PROSITE" id="PS50132">
    <property type="entry name" value="RGS"/>
    <property type="match status" value="1"/>
</dbReference>
<gene>
    <name type="primary">Grk4</name>
    <name type="synonym">Gprk2l</name>
</gene>
<proteinExistence type="evidence at transcript level"/>
<accession>O70291</accession>
<accession>Q3V151</accession>
<feature type="chain" id="PRO_0000085968" description="G protein-coupled receptor kinase 4">
    <location>
        <begin position="1"/>
        <end position="574"/>
    </location>
</feature>
<feature type="domain" description="RGS" evidence="5">
    <location>
        <begin position="51"/>
        <end position="171"/>
    </location>
</feature>
<feature type="domain" description="Protein kinase" evidence="4">
    <location>
        <begin position="186"/>
        <end position="448"/>
    </location>
</feature>
<feature type="domain" description="AGC-kinase C-terminal" evidence="6">
    <location>
        <begin position="449"/>
        <end position="514"/>
    </location>
</feature>
<feature type="region of interest" description="N-terminal">
    <location>
        <begin position="1"/>
        <end position="153"/>
    </location>
</feature>
<feature type="active site" description="Proton acceptor" evidence="4 7">
    <location>
        <position position="311"/>
    </location>
</feature>
<feature type="binding site" evidence="4">
    <location>
        <begin position="192"/>
        <end position="200"/>
    </location>
    <ligand>
        <name>ATP</name>
        <dbReference type="ChEBI" id="CHEBI:30616"/>
    </ligand>
</feature>
<feature type="binding site" evidence="4">
    <location>
        <position position="215"/>
    </location>
    <ligand>
        <name>ATP</name>
        <dbReference type="ChEBI" id="CHEBI:30616"/>
    </ligand>
</feature>
<feature type="modified residue" description="N-acetylmethionine" evidence="2">
    <location>
        <position position="1"/>
    </location>
</feature>
<feature type="modified residue" description="Phosphoserine" evidence="3">
    <location>
        <position position="484"/>
    </location>
</feature>
<feature type="sequence conflict" description="In Ref. 1; AAC09266." evidence="8" ref="1">
    <original>F</original>
    <variation>M</variation>
    <location>
        <position position="6"/>
    </location>
</feature>
<name>GRK4_MOUSE</name>
<evidence type="ECO:0000250" key="1"/>
<evidence type="ECO:0000250" key="2">
    <source>
        <dbReference type="UniProtKB" id="P32298"/>
    </source>
</evidence>
<evidence type="ECO:0000250" key="3">
    <source>
        <dbReference type="UniProtKB" id="P70507"/>
    </source>
</evidence>
<evidence type="ECO:0000255" key="4">
    <source>
        <dbReference type="PROSITE-ProRule" id="PRU00159"/>
    </source>
</evidence>
<evidence type="ECO:0000255" key="5">
    <source>
        <dbReference type="PROSITE-ProRule" id="PRU00171"/>
    </source>
</evidence>
<evidence type="ECO:0000255" key="6">
    <source>
        <dbReference type="PROSITE-ProRule" id="PRU00618"/>
    </source>
</evidence>
<evidence type="ECO:0000255" key="7">
    <source>
        <dbReference type="PROSITE-ProRule" id="PRU10027"/>
    </source>
</evidence>
<evidence type="ECO:0000305" key="8"/>
<reference key="1">
    <citation type="journal article" date="1999" name="J. Biol. Chem.">
        <title>The GRK4 subfamily of G protein-coupled receptor kinases. Alternative splicing, gene organization, and sequence conservation.</title>
        <authorList>
            <person name="Premont R.T."/>
            <person name="Macrae A.D."/>
            <person name="Aparicio S.A."/>
            <person name="Kendall H.E."/>
            <person name="Welch J.E."/>
            <person name="Lefkowitz R.J."/>
        </authorList>
    </citation>
    <scope>NUCLEOTIDE SEQUENCE [MRNA]</scope>
</reference>
<reference key="2">
    <citation type="journal article" date="2005" name="Science">
        <title>The transcriptional landscape of the mammalian genome.</title>
        <authorList>
            <person name="Carninci P."/>
            <person name="Kasukawa T."/>
            <person name="Katayama S."/>
            <person name="Gough J."/>
            <person name="Frith M.C."/>
            <person name="Maeda N."/>
            <person name="Oyama R."/>
            <person name="Ravasi T."/>
            <person name="Lenhard B."/>
            <person name="Wells C."/>
            <person name="Kodzius R."/>
            <person name="Shimokawa K."/>
            <person name="Bajic V.B."/>
            <person name="Brenner S.E."/>
            <person name="Batalov S."/>
            <person name="Forrest A.R."/>
            <person name="Zavolan M."/>
            <person name="Davis M.J."/>
            <person name="Wilming L.G."/>
            <person name="Aidinis V."/>
            <person name="Allen J.E."/>
            <person name="Ambesi-Impiombato A."/>
            <person name="Apweiler R."/>
            <person name="Aturaliya R.N."/>
            <person name="Bailey T.L."/>
            <person name="Bansal M."/>
            <person name="Baxter L."/>
            <person name="Beisel K.W."/>
            <person name="Bersano T."/>
            <person name="Bono H."/>
            <person name="Chalk A.M."/>
            <person name="Chiu K.P."/>
            <person name="Choudhary V."/>
            <person name="Christoffels A."/>
            <person name="Clutterbuck D.R."/>
            <person name="Crowe M.L."/>
            <person name="Dalla E."/>
            <person name="Dalrymple B.P."/>
            <person name="de Bono B."/>
            <person name="Della Gatta G."/>
            <person name="di Bernardo D."/>
            <person name="Down T."/>
            <person name="Engstrom P."/>
            <person name="Fagiolini M."/>
            <person name="Faulkner G."/>
            <person name="Fletcher C.F."/>
            <person name="Fukushima T."/>
            <person name="Furuno M."/>
            <person name="Futaki S."/>
            <person name="Gariboldi M."/>
            <person name="Georgii-Hemming P."/>
            <person name="Gingeras T.R."/>
            <person name="Gojobori T."/>
            <person name="Green R.E."/>
            <person name="Gustincich S."/>
            <person name="Harbers M."/>
            <person name="Hayashi Y."/>
            <person name="Hensch T.K."/>
            <person name="Hirokawa N."/>
            <person name="Hill D."/>
            <person name="Huminiecki L."/>
            <person name="Iacono M."/>
            <person name="Ikeo K."/>
            <person name="Iwama A."/>
            <person name="Ishikawa T."/>
            <person name="Jakt M."/>
            <person name="Kanapin A."/>
            <person name="Katoh M."/>
            <person name="Kawasawa Y."/>
            <person name="Kelso J."/>
            <person name="Kitamura H."/>
            <person name="Kitano H."/>
            <person name="Kollias G."/>
            <person name="Krishnan S.P."/>
            <person name="Kruger A."/>
            <person name="Kummerfeld S.K."/>
            <person name="Kurochkin I.V."/>
            <person name="Lareau L.F."/>
            <person name="Lazarevic D."/>
            <person name="Lipovich L."/>
            <person name="Liu J."/>
            <person name="Liuni S."/>
            <person name="McWilliam S."/>
            <person name="Madan Babu M."/>
            <person name="Madera M."/>
            <person name="Marchionni L."/>
            <person name="Matsuda H."/>
            <person name="Matsuzawa S."/>
            <person name="Miki H."/>
            <person name="Mignone F."/>
            <person name="Miyake S."/>
            <person name="Morris K."/>
            <person name="Mottagui-Tabar S."/>
            <person name="Mulder N."/>
            <person name="Nakano N."/>
            <person name="Nakauchi H."/>
            <person name="Ng P."/>
            <person name="Nilsson R."/>
            <person name="Nishiguchi S."/>
            <person name="Nishikawa S."/>
            <person name="Nori F."/>
            <person name="Ohara O."/>
            <person name="Okazaki Y."/>
            <person name="Orlando V."/>
            <person name="Pang K.C."/>
            <person name="Pavan W.J."/>
            <person name="Pavesi G."/>
            <person name="Pesole G."/>
            <person name="Petrovsky N."/>
            <person name="Piazza S."/>
            <person name="Reed J."/>
            <person name="Reid J.F."/>
            <person name="Ring B.Z."/>
            <person name="Ringwald M."/>
            <person name="Rost B."/>
            <person name="Ruan Y."/>
            <person name="Salzberg S.L."/>
            <person name="Sandelin A."/>
            <person name="Schneider C."/>
            <person name="Schoenbach C."/>
            <person name="Sekiguchi K."/>
            <person name="Semple C.A."/>
            <person name="Seno S."/>
            <person name="Sessa L."/>
            <person name="Sheng Y."/>
            <person name="Shibata Y."/>
            <person name="Shimada H."/>
            <person name="Shimada K."/>
            <person name="Silva D."/>
            <person name="Sinclair B."/>
            <person name="Sperling S."/>
            <person name="Stupka E."/>
            <person name="Sugiura K."/>
            <person name="Sultana R."/>
            <person name="Takenaka Y."/>
            <person name="Taki K."/>
            <person name="Tammoja K."/>
            <person name="Tan S.L."/>
            <person name="Tang S."/>
            <person name="Taylor M.S."/>
            <person name="Tegner J."/>
            <person name="Teichmann S.A."/>
            <person name="Ueda H.R."/>
            <person name="van Nimwegen E."/>
            <person name="Verardo R."/>
            <person name="Wei C.L."/>
            <person name="Yagi K."/>
            <person name="Yamanishi H."/>
            <person name="Zabarovsky E."/>
            <person name="Zhu S."/>
            <person name="Zimmer A."/>
            <person name="Hide W."/>
            <person name="Bult C."/>
            <person name="Grimmond S.M."/>
            <person name="Teasdale R.D."/>
            <person name="Liu E.T."/>
            <person name="Brusic V."/>
            <person name="Quackenbush J."/>
            <person name="Wahlestedt C."/>
            <person name="Mattick J.S."/>
            <person name="Hume D.A."/>
            <person name="Kai C."/>
            <person name="Sasaki D."/>
            <person name="Tomaru Y."/>
            <person name="Fukuda S."/>
            <person name="Kanamori-Katayama M."/>
            <person name="Suzuki M."/>
            <person name="Aoki J."/>
            <person name="Arakawa T."/>
            <person name="Iida J."/>
            <person name="Imamura K."/>
            <person name="Itoh M."/>
            <person name="Kato T."/>
            <person name="Kawaji H."/>
            <person name="Kawagashira N."/>
            <person name="Kawashima T."/>
            <person name="Kojima M."/>
            <person name="Kondo S."/>
            <person name="Konno H."/>
            <person name="Nakano K."/>
            <person name="Ninomiya N."/>
            <person name="Nishio T."/>
            <person name="Okada M."/>
            <person name="Plessy C."/>
            <person name="Shibata K."/>
            <person name="Shiraki T."/>
            <person name="Suzuki S."/>
            <person name="Tagami M."/>
            <person name="Waki K."/>
            <person name="Watahiki A."/>
            <person name="Okamura-Oho Y."/>
            <person name="Suzuki H."/>
            <person name="Kawai J."/>
            <person name="Hayashizaki Y."/>
        </authorList>
    </citation>
    <scope>NUCLEOTIDE SEQUENCE [LARGE SCALE MRNA]</scope>
    <source>
        <strain>C57BL/6J</strain>
        <tissue>Testis</tissue>
    </source>
</reference>
<reference key="3">
    <citation type="submission" date="2005-07" db="EMBL/GenBank/DDBJ databases">
        <authorList>
            <person name="Mural R.J."/>
            <person name="Adams M.D."/>
            <person name="Myers E.W."/>
            <person name="Smith H.O."/>
            <person name="Venter J.C."/>
        </authorList>
    </citation>
    <scope>NUCLEOTIDE SEQUENCE [LARGE SCALE GENOMIC DNA]</scope>
</reference>
<reference key="4">
    <citation type="journal article" date="2004" name="Genome Res.">
        <title>The status, quality, and expansion of the NIH full-length cDNA project: the Mammalian Gene Collection (MGC).</title>
        <authorList>
            <consortium name="The MGC Project Team"/>
        </authorList>
    </citation>
    <scope>NUCLEOTIDE SEQUENCE [LARGE SCALE MRNA]</scope>
    <source>
        <tissue>Brain</tissue>
    </source>
</reference>
<protein>
    <recommendedName>
        <fullName>G protein-coupled receptor kinase 4</fullName>
        <ecNumber>2.7.11.16</ecNumber>
    </recommendedName>
    <alternativeName>
        <fullName>G protein-coupled receptor kinase GRK4</fullName>
    </alternativeName>
</protein>
<sequence length="574" mass="66928">MELENFVANNLLLKARLGFNKQTGRSKKWRELLKFPPVSMCTELRWSIEKDFSSLCDKQPIGRLLFRQFCDTKPDLKRCIEFLDAVAEYEVTIEEEQREFGLAIFSRFFKEKSEVPLPEIPPDIVKECKWNLKQNSPSQNVFEECAGIVCKYLSETPFEEYQESTYFNRFLQWKWLERRPVTKNTFRQYRVLGKGGFGEVCACQVRATGKMYACKKLEKKRIKKRKGEAMALNEKRILEKLHSRFVVSLAYTYETKDALCLVLTIMNGGDLKYHIYNLGDPGFEEPRAVFYAAELCCGLEDLQRKRIVYRDLKPENILLDDHGHIRISDLGLAMEVPEGEMVRGRVGTVGYMAPEIINHEKYTFSPDWWGLGCLIYEMIAGHSPFRKYKEKVNREELERRVKNETEEYSERFSEDAKSICSMLLIKDPSKRLGCQRDGVSAVKQHPIFKDINFSRLEANMLDPPFIPDPQAIYCRNILDIGQFSVVKGVNLDTNDEIFYAEFATGSVTIPWQNEMIESGCFKDLNENEDDLSSLEKYKMCSSILRPKRNFFRRLFRRTGCLNIALSEEREPTEH</sequence>
<organism>
    <name type="scientific">Mus musculus</name>
    <name type="common">Mouse</name>
    <dbReference type="NCBI Taxonomy" id="10090"/>
    <lineage>
        <taxon>Eukaryota</taxon>
        <taxon>Metazoa</taxon>
        <taxon>Chordata</taxon>
        <taxon>Craniata</taxon>
        <taxon>Vertebrata</taxon>
        <taxon>Euteleostomi</taxon>
        <taxon>Mammalia</taxon>
        <taxon>Eutheria</taxon>
        <taxon>Euarchontoglires</taxon>
        <taxon>Glires</taxon>
        <taxon>Rodentia</taxon>
        <taxon>Myomorpha</taxon>
        <taxon>Muroidea</taxon>
        <taxon>Muridae</taxon>
        <taxon>Murinae</taxon>
        <taxon>Mus</taxon>
        <taxon>Mus</taxon>
    </lineage>
</organism>
<comment type="function">
    <text>Specifically phosphorylates the activated forms of G protein-coupled receptors.</text>
</comment>
<comment type="catalytic activity">
    <reaction>
        <text>[G-protein-coupled receptor] + ATP = [G-protein-coupled receptor]-phosphate + ADP + H(+)</text>
        <dbReference type="Rhea" id="RHEA:12008"/>
        <dbReference type="Rhea" id="RHEA-COMP:11260"/>
        <dbReference type="Rhea" id="RHEA-COMP:11261"/>
        <dbReference type="ChEBI" id="CHEBI:15378"/>
        <dbReference type="ChEBI" id="CHEBI:30616"/>
        <dbReference type="ChEBI" id="CHEBI:43176"/>
        <dbReference type="ChEBI" id="CHEBI:68546"/>
        <dbReference type="ChEBI" id="CHEBI:456216"/>
        <dbReference type="EC" id="2.7.11.16"/>
    </reaction>
</comment>
<comment type="activity regulation">
    <text evidence="1">Inhibited by heparin.</text>
</comment>
<comment type="subunit">
    <text evidence="1">Interacts with DRD3.</text>
</comment>
<comment type="subcellular location">
    <subcellularLocation>
        <location>Cytoplasm</location>
    </subcellularLocation>
    <subcellularLocation>
        <location evidence="1">Cytoplasm</location>
        <location evidence="1">Cell cortex</location>
    </subcellularLocation>
</comment>
<comment type="PTM">
    <text evidence="1">Palmitoylated.</text>
</comment>
<comment type="similarity">
    <text evidence="8">Belongs to the protein kinase superfamily. AGC Ser/Thr protein kinase family. GPRK subfamily.</text>
</comment>
<keyword id="KW-0007">Acetylation</keyword>
<keyword id="KW-0067">ATP-binding</keyword>
<keyword id="KW-0963">Cytoplasm</keyword>
<keyword id="KW-0418">Kinase</keyword>
<keyword id="KW-0449">Lipoprotein</keyword>
<keyword id="KW-0547">Nucleotide-binding</keyword>
<keyword id="KW-0564">Palmitate</keyword>
<keyword id="KW-0597">Phosphoprotein</keyword>
<keyword id="KW-1185">Reference proteome</keyword>
<keyword id="KW-0723">Serine/threonine-protein kinase</keyword>
<keyword id="KW-0808">Transferase</keyword>